<proteinExistence type="inferred from homology"/>
<evidence type="ECO:0000255" key="1">
    <source>
        <dbReference type="HAMAP-Rule" id="MF_00115"/>
    </source>
</evidence>
<feature type="chain" id="PRO_1000191372" description="Large-conductance mechanosensitive channel">
    <location>
        <begin position="1"/>
        <end position="136"/>
    </location>
</feature>
<feature type="transmembrane region" description="Helical" evidence="1">
    <location>
        <begin position="10"/>
        <end position="30"/>
    </location>
</feature>
<feature type="transmembrane region" description="Helical" evidence="1">
    <location>
        <begin position="76"/>
        <end position="96"/>
    </location>
</feature>
<keyword id="KW-0997">Cell inner membrane</keyword>
<keyword id="KW-1003">Cell membrane</keyword>
<keyword id="KW-0407">Ion channel</keyword>
<keyword id="KW-0406">Ion transport</keyword>
<keyword id="KW-0472">Membrane</keyword>
<keyword id="KW-0812">Transmembrane</keyword>
<keyword id="KW-1133">Transmembrane helix</keyword>
<keyword id="KW-0813">Transport</keyword>
<accession>B7LRQ7</accession>
<dbReference type="EMBL" id="CU928158">
    <property type="protein sequence ID" value="CAQ90754.1"/>
    <property type="molecule type" value="Genomic_DNA"/>
</dbReference>
<dbReference type="RefSeq" id="WP_000022442.1">
    <property type="nucleotide sequence ID" value="NC_011740.1"/>
</dbReference>
<dbReference type="SMR" id="B7LRQ7"/>
<dbReference type="GeneID" id="75173461"/>
<dbReference type="KEGG" id="efe:EFER_3274"/>
<dbReference type="HOGENOM" id="CLU_095787_0_0_6"/>
<dbReference type="OrthoDB" id="9810350at2"/>
<dbReference type="Proteomes" id="UP000000745">
    <property type="component" value="Chromosome"/>
</dbReference>
<dbReference type="GO" id="GO:0005886">
    <property type="term" value="C:plasma membrane"/>
    <property type="evidence" value="ECO:0007669"/>
    <property type="project" value="UniProtKB-SubCell"/>
</dbReference>
<dbReference type="GO" id="GO:0008381">
    <property type="term" value="F:mechanosensitive monoatomic ion channel activity"/>
    <property type="evidence" value="ECO:0007669"/>
    <property type="project" value="UniProtKB-UniRule"/>
</dbReference>
<dbReference type="FunFam" id="1.10.1200.120:FF:000001">
    <property type="entry name" value="Large-conductance mechanosensitive channel"/>
    <property type="match status" value="1"/>
</dbReference>
<dbReference type="Gene3D" id="1.10.1200.120">
    <property type="entry name" value="Large-conductance mechanosensitive channel, MscL, domain 1"/>
    <property type="match status" value="1"/>
</dbReference>
<dbReference type="HAMAP" id="MF_00115">
    <property type="entry name" value="MscL"/>
    <property type="match status" value="1"/>
</dbReference>
<dbReference type="InterPro" id="IPR019823">
    <property type="entry name" value="Mechanosensitive_channel_CS"/>
</dbReference>
<dbReference type="InterPro" id="IPR001185">
    <property type="entry name" value="MS_channel"/>
</dbReference>
<dbReference type="InterPro" id="IPR037673">
    <property type="entry name" value="MSC/AndL"/>
</dbReference>
<dbReference type="InterPro" id="IPR036019">
    <property type="entry name" value="MscL_channel"/>
</dbReference>
<dbReference type="NCBIfam" id="TIGR00220">
    <property type="entry name" value="mscL"/>
    <property type="match status" value="1"/>
</dbReference>
<dbReference type="NCBIfam" id="NF001841">
    <property type="entry name" value="PRK00567.1-1"/>
    <property type="match status" value="1"/>
</dbReference>
<dbReference type="NCBIfam" id="NF001843">
    <property type="entry name" value="PRK00567.1-4"/>
    <property type="match status" value="1"/>
</dbReference>
<dbReference type="PANTHER" id="PTHR30266:SF2">
    <property type="entry name" value="LARGE-CONDUCTANCE MECHANOSENSITIVE CHANNEL"/>
    <property type="match status" value="1"/>
</dbReference>
<dbReference type="PANTHER" id="PTHR30266">
    <property type="entry name" value="MECHANOSENSITIVE CHANNEL MSCL"/>
    <property type="match status" value="1"/>
</dbReference>
<dbReference type="Pfam" id="PF01741">
    <property type="entry name" value="MscL"/>
    <property type="match status" value="1"/>
</dbReference>
<dbReference type="PRINTS" id="PR01264">
    <property type="entry name" value="MECHCHANNEL"/>
</dbReference>
<dbReference type="SUPFAM" id="SSF81330">
    <property type="entry name" value="Gated mechanosensitive channel"/>
    <property type="match status" value="1"/>
</dbReference>
<dbReference type="PROSITE" id="PS01327">
    <property type="entry name" value="MSCL"/>
    <property type="match status" value="1"/>
</dbReference>
<sequence>MSIIKEFREFAMRGNVVDLAVGVIIGAAFGKIVSSLVADIIMPPLGLLIGGIDFKQFAVTLRDAQGDIPAVVMHYGVFIQNVFDFLIVAFAIFMAIKLINKLNRKKEEPAAAPAPTKEEVLLTEIRDLLKEQNNRS</sequence>
<protein>
    <recommendedName>
        <fullName evidence="1">Large-conductance mechanosensitive channel</fullName>
    </recommendedName>
</protein>
<gene>
    <name evidence="1" type="primary">mscL</name>
    <name type="ordered locus">EFER_3274</name>
</gene>
<name>MSCL_ESCF3</name>
<reference key="1">
    <citation type="journal article" date="2009" name="PLoS Genet.">
        <title>Organised genome dynamics in the Escherichia coli species results in highly diverse adaptive paths.</title>
        <authorList>
            <person name="Touchon M."/>
            <person name="Hoede C."/>
            <person name="Tenaillon O."/>
            <person name="Barbe V."/>
            <person name="Baeriswyl S."/>
            <person name="Bidet P."/>
            <person name="Bingen E."/>
            <person name="Bonacorsi S."/>
            <person name="Bouchier C."/>
            <person name="Bouvet O."/>
            <person name="Calteau A."/>
            <person name="Chiapello H."/>
            <person name="Clermont O."/>
            <person name="Cruveiller S."/>
            <person name="Danchin A."/>
            <person name="Diard M."/>
            <person name="Dossat C."/>
            <person name="Karoui M.E."/>
            <person name="Frapy E."/>
            <person name="Garry L."/>
            <person name="Ghigo J.M."/>
            <person name="Gilles A.M."/>
            <person name="Johnson J."/>
            <person name="Le Bouguenec C."/>
            <person name="Lescat M."/>
            <person name="Mangenot S."/>
            <person name="Martinez-Jehanne V."/>
            <person name="Matic I."/>
            <person name="Nassif X."/>
            <person name="Oztas S."/>
            <person name="Petit M.A."/>
            <person name="Pichon C."/>
            <person name="Rouy Z."/>
            <person name="Ruf C.S."/>
            <person name="Schneider D."/>
            <person name="Tourret J."/>
            <person name="Vacherie B."/>
            <person name="Vallenet D."/>
            <person name="Medigue C."/>
            <person name="Rocha E.P.C."/>
            <person name="Denamur E."/>
        </authorList>
    </citation>
    <scope>NUCLEOTIDE SEQUENCE [LARGE SCALE GENOMIC DNA]</scope>
    <source>
        <strain>ATCC 35469 / DSM 13698 / BCRC 15582 / CCUG 18766 / IAM 14443 / JCM 21226 / LMG 7866 / NBRC 102419 / NCTC 12128 / CDC 0568-73</strain>
    </source>
</reference>
<comment type="function">
    <text evidence="1">Channel that opens in response to stretch forces in the membrane lipid bilayer. May participate in the regulation of osmotic pressure changes within the cell.</text>
</comment>
<comment type="subunit">
    <text evidence="1">Homopentamer.</text>
</comment>
<comment type="subcellular location">
    <subcellularLocation>
        <location evidence="1">Cell inner membrane</location>
        <topology evidence="1">Multi-pass membrane protein</topology>
    </subcellularLocation>
</comment>
<comment type="similarity">
    <text evidence="1">Belongs to the MscL family.</text>
</comment>
<organism>
    <name type="scientific">Escherichia fergusonii (strain ATCC 35469 / DSM 13698 / CCUG 18766 / IAM 14443 / JCM 21226 / LMG 7866 / NBRC 102419 / NCTC 12128 / CDC 0568-73)</name>
    <dbReference type="NCBI Taxonomy" id="585054"/>
    <lineage>
        <taxon>Bacteria</taxon>
        <taxon>Pseudomonadati</taxon>
        <taxon>Pseudomonadota</taxon>
        <taxon>Gammaproteobacteria</taxon>
        <taxon>Enterobacterales</taxon>
        <taxon>Enterobacteriaceae</taxon>
        <taxon>Escherichia</taxon>
    </lineage>
</organism>